<protein>
    <recommendedName>
        <fullName>Hemoglobin subunit beta</fullName>
    </recommendedName>
    <alternativeName>
        <fullName>Beta-globin</fullName>
    </alternativeName>
    <alternativeName>
        <fullName>Hemoglobin beta chain</fullName>
    </alternativeName>
</protein>
<name>HBB_AILFU</name>
<evidence type="ECO:0000250" key="1">
    <source>
        <dbReference type="UniProtKB" id="P02086"/>
    </source>
</evidence>
<evidence type="ECO:0000250" key="2">
    <source>
        <dbReference type="UniProtKB" id="P68871"/>
    </source>
</evidence>
<evidence type="ECO:0000255" key="3">
    <source>
        <dbReference type="PROSITE-ProRule" id="PRU00238"/>
    </source>
</evidence>
<dbReference type="PIR" id="S06527">
    <property type="entry name" value="HBFQL"/>
</dbReference>
<dbReference type="SMR" id="P18982"/>
<dbReference type="GO" id="GO:0072562">
    <property type="term" value="C:blood microparticle"/>
    <property type="evidence" value="ECO:0007669"/>
    <property type="project" value="TreeGrafter"/>
</dbReference>
<dbReference type="GO" id="GO:0031838">
    <property type="term" value="C:haptoglobin-hemoglobin complex"/>
    <property type="evidence" value="ECO:0007669"/>
    <property type="project" value="TreeGrafter"/>
</dbReference>
<dbReference type="GO" id="GO:0005833">
    <property type="term" value="C:hemoglobin complex"/>
    <property type="evidence" value="ECO:0007669"/>
    <property type="project" value="InterPro"/>
</dbReference>
<dbReference type="GO" id="GO:0031720">
    <property type="term" value="F:haptoglobin binding"/>
    <property type="evidence" value="ECO:0007669"/>
    <property type="project" value="TreeGrafter"/>
</dbReference>
<dbReference type="GO" id="GO:0020037">
    <property type="term" value="F:heme binding"/>
    <property type="evidence" value="ECO:0007669"/>
    <property type="project" value="InterPro"/>
</dbReference>
<dbReference type="GO" id="GO:0031721">
    <property type="term" value="F:hemoglobin alpha binding"/>
    <property type="evidence" value="ECO:0007669"/>
    <property type="project" value="TreeGrafter"/>
</dbReference>
<dbReference type="GO" id="GO:0046872">
    <property type="term" value="F:metal ion binding"/>
    <property type="evidence" value="ECO:0007669"/>
    <property type="project" value="UniProtKB-KW"/>
</dbReference>
<dbReference type="GO" id="GO:0043177">
    <property type="term" value="F:organic acid binding"/>
    <property type="evidence" value="ECO:0007669"/>
    <property type="project" value="TreeGrafter"/>
</dbReference>
<dbReference type="GO" id="GO:0019825">
    <property type="term" value="F:oxygen binding"/>
    <property type="evidence" value="ECO:0007669"/>
    <property type="project" value="InterPro"/>
</dbReference>
<dbReference type="GO" id="GO:0005344">
    <property type="term" value="F:oxygen carrier activity"/>
    <property type="evidence" value="ECO:0007669"/>
    <property type="project" value="UniProtKB-KW"/>
</dbReference>
<dbReference type="GO" id="GO:0004601">
    <property type="term" value="F:peroxidase activity"/>
    <property type="evidence" value="ECO:0007669"/>
    <property type="project" value="TreeGrafter"/>
</dbReference>
<dbReference type="GO" id="GO:0042744">
    <property type="term" value="P:hydrogen peroxide catabolic process"/>
    <property type="evidence" value="ECO:0007669"/>
    <property type="project" value="TreeGrafter"/>
</dbReference>
<dbReference type="CDD" id="cd08925">
    <property type="entry name" value="Hb-beta-like"/>
    <property type="match status" value="1"/>
</dbReference>
<dbReference type="FunFam" id="1.10.490.10:FF:000001">
    <property type="entry name" value="Hemoglobin subunit beta"/>
    <property type="match status" value="1"/>
</dbReference>
<dbReference type="Gene3D" id="1.10.490.10">
    <property type="entry name" value="Globins"/>
    <property type="match status" value="1"/>
</dbReference>
<dbReference type="InterPro" id="IPR000971">
    <property type="entry name" value="Globin"/>
</dbReference>
<dbReference type="InterPro" id="IPR009050">
    <property type="entry name" value="Globin-like_sf"/>
</dbReference>
<dbReference type="InterPro" id="IPR012292">
    <property type="entry name" value="Globin/Proto"/>
</dbReference>
<dbReference type="InterPro" id="IPR002337">
    <property type="entry name" value="Hemoglobin_b"/>
</dbReference>
<dbReference type="InterPro" id="IPR050056">
    <property type="entry name" value="Hemoglobin_oxygen_transport"/>
</dbReference>
<dbReference type="PANTHER" id="PTHR11442">
    <property type="entry name" value="HEMOGLOBIN FAMILY MEMBER"/>
    <property type="match status" value="1"/>
</dbReference>
<dbReference type="PANTHER" id="PTHR11442:SF42">
    <property type="entry name" value="HEMOGLOBIN SUBUNIT BETA"/>
    <property type="match status" value="1"/>
</dbReference>
<dbReference type="Pfam" id="PF00042">
    <property type="entry name" value="Globin"/>
    <property type="match status" value="1"/>
</dbReference>
<dbReference type="PRINTS" id="PR00814">
    <property type="entry name" value="BETAHAEM"/>
</dbReference>
<dbReference type="SUPFAM" id="SSF46458">
    <property type="entry name" value="Globin-like"/>
    <property type="match status" value="1"/>
</dbReference>
<dbReference type="PROSITE" id="PS01033">
    <property type="entry name" value="GLOBIN"/>
    <property type="match status" value="1"/>
</dbReference>
<comment type="function">
    <text>Involved in oxygen transport from the lung to the various peripheral tissues.</text>
</comment>
<comment type="subunit">
    <text>Heterotetramer of two alpha chains and two beta chains.</text>
</comment>
<comment type="tissue specificity">
    <text>Red blood cells.</text>
</comment>
<comment type="similarity">
    <text evidence="3">Belongs to the globin family.</text>
</comment>
<accession>P18982</accession>
<organism>
    <name type="scientific">Ailurus fulgens</name>
    <name type="common">Himalayan red panda</name>
    <dbReference type="NCBI Taxonomy" id="9649"/>
    <lineage>
        <taxon>Eukaryota</taxon>
        <taxon>Metazoa</taxon>
        <taxon>Chordata</taxon>
        <taxon>Craniata</taxon>
        <taxon>Vertebrata</taxon>
        <taxon>Euteleostomi</taxon>
        <taxon>Mammalia</taxon>
        <taxon>Eutheria</taxon>
        <taxon>Laurasiatheria</taxon>
        <taxon>Carnivora</taxon>
        <taxon>Caniformia</taxon>
        <taxon>Musteloidea</taxon>
        <taxon>Ailuridae</taxon>
        <taxon>Ailurus</taxon>
    </lineage>
</organism>
<proteinExistence type="evidence at protein level"/>
<gene>
    <name type="primary">HBB</name>
</gene>
<feature type="chain" id="PRO_0000052858" description="Hemoglobin subunit beta">
    <location>
        <begin position="1"/>
        <end position="146"/>
    </location>
</feature>
<feature type="domain" description="Globin" evidence="3">
    <location>
        <begin position="2"/>
        <end position="146"/>
    </location>
</feature>
<feature type="binding site" description="distal binding residue">
    <location>
        <position position="63"/>
    </location>
    <ligand>
        <name>heme b</name>
        <dbReference type="ChEBI" id="CHEBI:60344"/>
    </ligand>
    <ligandPart>
        <name>Fe</name>
        <dbReference type="ChEBI" id="CHEBI:18248"/>
    </ligandPart>
</feature>
<feature type="binding site" description="proximal binding residue">
    <location>
        <position position="92"/>
    </location>
    <ligand>
        <name>heme b</name>
        <dbReference type="ChEBI" id="CHEBI:60344"/>
    </ligand>
    <ligandPart>
        <name>Fe</name>
        <dbReference type="ChEBI" id="CHEBI:18248"/>
    </ligandPart>
</feature>
<feature type="modified residue" description="N-acetylvaline" evidence="1">
    <location>
        <position position="1"/>
    </location>
</feature>
<feature type="modified residue" description="Phosphothreonine" evidence="2">
    <location>
        <position position="12"/>
    </location>
</feature>
<feature type="modified residue" description="Phosphoserine" evidence="2">
    <location>
        <position position="44"/>
    </location>
</feature>
<feature type="modified residue" description="N6-acetyllysine" evidence="2">
    <location>
        <position position="59"/>
    </location>
</feature>
<feature type="modified residue" description="N6-acetyllysine" evidence="2">
    <location>
        <position position="82"/>
    </location>
</feature>
<feature type="modified residue" description="S-nitrosocysteine" evidence="2">
    <location>
        <position position="93"/>
    </location>
</feature>
<feature type="modified residue" description="N6-acetyllysine" evidence="2">
    <location>
        <position position="144"/>
    </location>
</feature>
<reference key="1">
    <citation type="journal article" date="1986" name="Naturwissenschaften">
        <title>Hemoglobin of pandas: phylogenetic relationships of carnivores as ascertained with protein sequence data.</title>
        <authorList>
            <person name="Tagle D.A."/>
            <person name="Miyamoto M.M."/>
            <person name="Goodman M."/>
            <person name="Hofmann O."/>
            <person name="Braunitzer G."/>
            <person name="Goeltenboth R."/>
            <person name="Jalanka H."/>
        </authorList>
    </citation>
    <scope>PROTEIN SEQUENCE</scope>
</reference>
<sequence length="146" mass="15950">VHLTGEEKAAVTGLWSKVNVDEVGGEALGRLLVVYPWTQRFFDSFGDLSSPDAVMGNPKVKAHGKKVLNSFSEGLKNLDNLKGTFAKLSELHCDKLHVDPENFKLLGNVLVCVLAHHFGKEFTPQVQAAYQKVVAGVANALAHKYH</sequence>
<keyword id="KW-0007">Acetylation</keyword>
<keyword id="KW-0903">Direct protein sequencing</keyword>
<keyword id="KW-0349">Heme</keyword>
<keyword id="KW-0408">Iron</keyword>
<keyword id="KW-0479">Metal-binding</keyword>
<keyword id="KW-0561">Oxygen transport</keyword>
<keyword id="KW-0597">Phosphoprotein</keyword>
<keyword id="KW-0702">S-nitrosylation</keyword>
<keyword id="KW-0813">Transport</keyword>